<name>RLK90_ARATH</name>
<sequence length="647" mass="70406">MRLFFTPSMSNLSIFFSILLLSLPLPSIGDLAADKSALLSFRSAVGGRTLLWDVKQTSPCNWTGVLCDGGRVTALRLPGETLSGHIPEGIFGNLTQLRTLSLRLNGLTGSLPLDLGSCSDLRRLYLQGNRFSGEIPEVLFSLSNLVRLNLAENEFSGEISSGFKNLTRLKTLYLENNKLSGSLLDLDLSLDQFNVSNNLLNGSIPKSLQKFDSDSFVGTSLCGKPLVVCSNEGTVPSQPISVGNIPGTVEGSEEKKKRKKLSGGAIAGIVIGCVVGLSLIVMILMVLFRKKGNERTRAIDLATIKHHEVEIPGEKAAVEAPENRSYVNEYSPSAVKAVEVNSSGMKKLVFFGNATKVFDLEDLLRASAEVLGKGTFGTAYKAVLDAVTLVAVKRLKDVTMADREFKEKIEVVGAMDHENLVPLRAYYYSGDEKLLVYDFMPMGSLSALLHGNKGAGRPPLNWEVRSGIALGAARGLDYLHSQDPLSSHGNVKSSNILLTNSHDARVSDFGLAQLVSASSTTPNRATGYRAPEVTDPRRVSQKADVYSFGVVLLELLTGKAPSNSVMNEEGMDLARWVHSVAREEWRNEVFDSELMSIETVVSVEEEMAEMLQLGIDCTEQHPDKRPVMVEVVRRIQELRQSGADRVG</sequence>
<reference key="1">
    <citation type="journal article" date="2000" name="DNA Res.">
        <title>Structural analysis of Arabidopsis thaliana chromosome 3. I. Sequence features of the regions of 4,504,864 bp covered by sixty P1 and TAC clones.</title>
        <authorList>
            <person name="Sato S."/>
            <person name="Nakamura Y."/>
            <person name="Kaneko T."/>
            <person name="Katoh T."/>
            <person name="Asamizu E."/>
            <person name="Tabata S."/>
        </authorList>
    </citation>
    <scope>NUCLEOTIDE SEQUENCE [LARGE SCALE GENOMIC DNA]</scope>
    <source>
        <strain>cv. Columbia</strain>
    </source>
</reference>
<reference key="2">
    <citation type="journal article" date="2017" name="Plant J.">
        <title>Araport11: a complete reannotation of the Arabidopsis thaliana reference genome.</title>
        <authorList>
            <person name="Cheng C.Y."/>
            <person name="Krishnakumar V."/>
            <person name="Chan A.P."/>
            <person name="Thibaud-Nissen F."/>
            <person name="Schobel S."/>
            <person name="Town C.D."/>
        </authorList>
    </citation>
    <scope>GENOME REANNOTATION</scope>
    <source>
        <strain>cv. Columbia</strain>
    </source>
</reference>
<reference key="3">
    <citation type="journal article" date="2003" name="Science">
        <title>Empirical analysis of transcriptional activity in the Arabidopsis genome.</title>
        <authorList>
            <person name="Yamada K."/>
            <person name="Lim J."/>
            <person name="Dale J.M."/>
            <person name="Chen H."/>
            <person name="Shinn P."/>
            <person name="Palm C.J."/>
            <person name="Southwick A.M."/>
            <person name="Wu H.C."/>
            <person name="Kim C.J."/>
            <person name="Nguyen M."/>
            <person name="Pham P.K."/>
            <person name="Cheuk R.F."/>
            <person name="Karlin-Newmann G."/>
            <person name="Liu S.X."/>
            <person name="Lam B."/>
            <person name="Sakano H."/>
            <person name="Wu T."/>
            <person name="Yu G."/>
            <person name="Miranda M."/>
            <person name="Quach H.L."/>
            <person name="Tripp M."/>
            <person name="Chang C.H."/>
            <person name="Lee J.M."/>
            <person name="Toriumi M.J."/>
            <person name="Chan M.M."/>
            <person name="Tang C.C."/>
            <person name="Onodera C.S."/>
            <person name="Deng J.M."/>
            <person name="Akiyama K."/>
            <person name="Ansari Y."/>
            <person name="Arakawa T."/>
            <person name="Banh J."/>
            <person name="Banno F."/>
            <person name="Bowser L."/>
            <person name="Brooks S.Y."/>
            <person name="Carninci P."/>
            <person name="Chao Q."/>
            <person name="Choy N."/>
            <person name="Enju A."/>
            <person name="Goldsmith A.D."/>
            <person name="Gurjal M."/>
            <person name="Hansen N.F."/>
            <person name="Hayashizaki Y."/>
            <person name="Johnson-Hopson C."/>
            <person name="Hsuan V.W."/>
            <person name="Iida K."/>
            <person name="Karnes M."/>
            <person name="Khan S."/>
            <person name="Koesema E."/>
            <person name="Ishida J."/>
            <person name="Jiang P.X."/>
            <person name="Jones T."/>
            <person name="Kawai J."/>
            <person name="Kamiya A."/>
            <person name="Meyers C."/>
            <person name="Nakajima M."/>
            <person name="Narusaka M."/>
            <person name="Seki M."/>
            <person name="Sakurai T."/>
            <person name="Satou M."/>
            <person name="Tamse R."/>
            <person name="Vaysberg M."/>
            <person name="Wallender E.K."/>
            <person name="Wong C."/>
            <person name="Yamamura Y."/>
            <person name="Yuan S."/>
            <person name="Shinozaki K."/>
            <person name="Davis R.W."/>
            <person name="Theologis A."/>
            <person name="Ecker J.R."/>
        </authorList>
    </citation>
    <scope>NUCLEOTIDE SEQUENCE [LARGE SCALE MRNA]</scope>
    <source>
        <strain>cv. Columbia</strain>
    </source>
</reference>
<reference key="4">
    <citation type="submission" date="2002-03" db="EMBL/GenBank/DDBJ databases">
        <title>Full-length cDNA from Arabidopsis thaliana.</title>
        <authorList>
            <person name="Brover V.V."/>
            <person name="Troukhan M.E."/>
            <person name="Alexandrov N.A."/>
            <person name="Lu Y.-P."/>
            <person name="Flavell R.B."/>
            <person name="Feldmann K.A."/>
        </authorList>
    </citation>
    <scope>NUCLEOTIDE SEQUENCE [LARGE SCALE MRNA]</scope>
</reference>
<reference key="5">
    <citation type="journal article" date="2003" name="Mol. Cell. Proteomics">
        <title>Large-scale analysis of in vivo phosphorylated membrane proteins by immobilized metal ion affinity chromatography and mass spectrometry.</title>
        <authorList>
            <person name="Nuehse T.S."/>
            <person name="Stensballe A."/>
            <person name="Jensen O.N."/>
            <person name="Peck S.C."/>
        </authorList>
    </citation>
    <scope>IDENTIFICATION BY MASS SPECTROMETRY [LARGE SCALE ANALYSIS]</scope>
    <source>
        <strain>cv. La-0</strain>
    </source>
</reference>
<reference key="6">
    <citation type="journal article" date="2004" name="Biosci. Biotechnol. Biochem.">
        <title>Molecular characterization of two highly homologous receptor-like kinase genes, RLK902 and RKL1, in Arabidopsis thaliana.</title>
        <authorList>
            <person name="Tarutani Y."/>
            <person name="Morimoto T."/>
            <person name="Sasaki A."/>
            <person name="Yasuda M."/>
            <person name="Nakashita H."/>
            <person name="Yoshida S."/>
            <person name="Yamaguchi I."/>
            <person name="Suzuki Y."/>
        </authorList>
    </citation>
    <scope>TISSUE SPECIFICITY</scope>
    <scope>DISRUPTION PHENOTYPE</scope>
    <scope>SUBCELLULAR LOCATION</scope>
</reference>
<reference key="7">
    <citation type="journal article" date="2004" name="Biosci. Biotechnol. Biochem.">
        <title>Identification of three clones which commonly interact with the kinase domains of highly homologous two receptor-like kinases, RLK902 and RKL1.</title>
        <authorList>
            <person name="Tarutani Y."/>
            <person name="Sasaki A."/>
            <person name="Yasuda M."/>
            <person name="Nakashita H."/>
            <person name="Yoshida S."/>
            <person name="Yamaguchi I."/>
            <person name="Suzuki Y."/>
        </authorList>
    </citation>
    <scope>AUTOPHOSPHORYLATION</scope>
    <scope>INTERACTION WITH AT3G17950; AT3G27210 AND AT5G05190</scope>
    <scope>INDUCTION</scope>
</reference>
<reference key="8">
    <citation type="journal article" date="2004" name="Plant Cell">
        <title>Phosphoproteomics of the Arabidopsis plasma membrane and a new phosphorylation site database.</title>
        <authorList>
            <person name="Nuehse T.S."/>
            <person name="Stensballe A."/>
            <person name="Jensen O.N."/>
            <person name="Peck S.C."/>
        </authorList>
    </citation>
    <scope>IDENTIFICATION BY MASS SPECTROMETRY [LARGE SCALE ANALYSIS]</scope>
</reference>
<reference key="9">
    <citation type="journal article" date="2007" name="Plant J.">
        <title>A leucine-rich repeat protein is required for growth promotion and enhanced seed production mediated by the endophytic fungus Piriformospora indica in Arabidopsis thaliana.</title>
        <authorList>
            <person name="Shahollari B."/>
            <person name="Vadassery J."/>
            <person name="Varma A."/>
            <person name="Oelmueller R."/>
        </authorList>
    </citation>
    <scope>SUBCELLULAR LOCATION</scope>
</reference>
<reference key="10">
    <citation type="journal article" date="2009" name="J. Proteomics">
        <title>Phosphoproteomic analysis of nuclei-enriched fractions from Arabidopsis thaliana.</title>
        <authorList>
            <person name="Jones A.M.E."/>
            <person name="MacLean D."/>
            <person name="Studholme D.J."/>
            <person name="Serna-Sanz A."/>
            <person name="Andreasson E."/>
            <person name="Rathjen J.P."/>
            <person name="Peck S.C."/>
        </authorList>
    </citation>
    <scope>IDENTIFICATION BY MASS SPECTROMETRY [LARGE SCALE ANALYSIS]</scope>
    <source>
        <strain>cv. Columbia</strain>
    </source>
</reference>
<reference key="11">
    <citation type="journal article" date="2009" name="Plant Physiol.">
        <title>Large-scale Arabidopsis phosphoproteome profiling reveals novel chloroplast kinase substrates and phosphorylation networks.</title>
        <authorList>
            <person name="Reiland S."/>
            <person name="Messerli G."/>
            <person name="Baerenfaller K."/>
            <person name="Gerrits B."/>
            <person name="Endler A."/>
            <person name="Grossmann J."/>
            <person name="Gruissem W."/>
            <person name="Baginsky S."/>
        </authorList>
    </citation>
    <scope>IDENTIFICATION BY MASS SPECTROMETRY [LARGE SCALE ANALYSIS]</scope>
</reference>
<dbReference type="EMBL" id="AB019230">
    <property type="protein sequence ID" value="BAB02707.1"/>
    <property type="molecule type" value="Genomic_DNA"/>
</dbReference>
<dbReference type="EMBL" id="CP002686">
    <property type="protein sequence ID" value="AEE76013.1"/>
    <property type="molecule type" value="Genomic_DNA"/>
</dbReference>
<dbReference type="EMBL" id="AY095994">
    <property type="protein sequence ID" value="AAM19950.1"/>
    <property type="molecule type" value="mRNA"/>
</dbReference>
<dbReference type="EMBL" id="BT002283">
    <property type="protein sequence ID" value="AAN72294.1"/>
    <property type="molecule type" value="mRNA"/>
</dbReference>
<dbReference type="EMBL" id="AY086189">
    <property type="protein sequence ID" value="AAM64268.1"/>
    <property type="status" value="ALT_INIT"/>
    <property type="molecule type" value="mRNA"/>
</dbReference>
<dbReference type="RefSeq" id="NP_566589.1">
    <property type="nucleotide sequence ID" value="NM_112665.3"/>
</dbReference>
<dbReference type="SMR" id="Q9LVI6"/>
<dbReference type="BioGRID" id="6386">
    <property type="interactions" value="78"/>
</dbReference>
<dbReference type="FunCoup" id="Q9LVI6">
    <property type="interactions" value="505"/>
</dbReference>
<dbReference type="IntAct" id="Q9LVI6">
    <property type="interactions" value="103"/>
</dbReference>
<dbReference type="STRING" id="3702.Q9LVI6"/>
<dbReference type="iPTMnet" id="Q9LVI6"/>
<dbReference type="PaxDb" id="3702-AT3G17840.1"/>
<dbReference type="ProteomicsDB" id="226900"/>
<dbReference type="EnsemblPlants" id="AT3G17840.1">
    <property type="protein sequence ID" value="AT3G17840.1"/>
    <property type="gene ID" value="AT3G17840"/>
</dbReference>
<dbReference type="GeneID" id="821053"/>
<dbReference type="Gramene" id="AT3G17840.1">
    <property type="protein sequence ID" value="AT3G17840.1"/>
    <property type="gene ID" value="AT3G17840"/>
</dbReference>
<dbReference type="KEGG" id="ath:AT3G17840"/>
<dbReference type="Araport" id="AT3G17840"/>
<dbReference type="TAIR" id="AT3G17840">
    <property type="gene designation" value="RLK902"/>
</dbReference>
<dbReference type="eggNOG" id="ENOG502QSFF">
    <property type="taxonomic scope" value="Eukaryota"/>
</dbReference>
<dbReference type="HOGENOM" id="CLU_000288_92_6_1"/>
<dbReference type="InParanoid" id="Q9LVI6"/>
<dbReference type="OMA" id="HSQGANI"/>
<dbReference type="PhylomeDB" id="Q9LVI6"/>
<dbReference type="CD-CODE" id="4299E36E">
    <property type="entry name" value="Nucleolus"/>
</dbReference>
<dbReference type="PRO" id="PR:Q9LVI6"/>
<dbReference type="Proteomes" id="UP000006548">
    <property type="component" value="Chromosome 3"/>
</dbReference>
<dbReference type="ExpressionAtlas" id="Q9LVI6">
    <property type="expression patterns" value="baseline and differential"/>
</dbReference>
<dbReference type="GO" id="GO:0005829">
    <property type="term" value="C:cytosol"/>
    <property type="evidence" value="ECO:0007005"/>
    <property type="project" value="TAIR"/>
</dbReference>
<dbReference type="GO" id="GO:0005886">
    <property type="term" value="C:plasma membrane"/>
    <property type="evidence" value="ECO:0000314"/>
    <property type="project" value="TAIR"/>
</dbReference>
<dbReference type="GO" id="GO:0009506">
    <property type="term" value="C:plasmodesma"/>
    <property type="evidence" value="ECO:0007005"/>
    <property type="project" value="TAIR"/>
</dbReference>
<dbReference type="GO" id="GO:0005524">
    <property type="term" value="F:ATP binding"/>
    <property type="evidence" value="ECO:0007669"/>
    <property type="project" value="UniProtKB-KW"/>
</dbReference>
<dbReference type="GO" id="GO:0004672">
    <property type="term" value="F:protein kinase activity"/>
    <property type="evidence" value="ECO:0007669"/>
    <property type="project" value="InterPro"/>
</dbReference>
<dbReference type="CDD" id="cd14066">
    <property type="entry name" value="STKc_IRAK"/>
    <property type="match status" value="1"/>
</dbReference>
<dbReference type="FunFam" id="3.30.200.20:FF:000307">
    <property type="entry name" value="pollen receptor-like kinase 1"/>
    <property type="match status" value="1"/>
</dbReference>
<dbReference type="FunFam" id="1.10.510.10:FF:000585">
    <property type="entry name" value="Probable inactive receptor kinase At1g48480"/>
    <property type="match status" value="1"/>
</dbReference>
<dbReference type="FunFam" id="3.80.10.10:FF:000234">
    <property type="entry name" value="Probable inactive receptor kinase RLK902"/>
    <property type="match status" value="1"/>
</dbReference>
<dbReference type="Gene3D" id="3.30.200.20">
    <property type="entry name" value="Phosphorylase Kinase, domain 1"/>
    <property type="match status" value="1"/>
</dbReference>
<dbReference type="Gene3D" id="3.80.10.10">
    <property type="entry name" value="Ribonuclease Inhibitor"/>
    <property type="match status" value="1"/>
</dbReference>
<dbReference type="Gene3D" id="1.10.510.10">
    <property type="entry name" value="Transferase(Phosphotransferase) domain 1"/>
    <property type="match status" value="1"/>
</dbReference>
<dbReference type="InterPro" id="IPR050994">
    <property type="entry name" value="At_inactive_RLKs"/>
</dbReference>
<dbReference type="InterPro" id="IPR011009">
    <property type="entry name" value="Kinase-like_dom_sf"/>
</dbReference>
<dbReference type="InterPro" id="IPR001611">
    <property type="entry name" value="Leu-rich_rpt"/>
</dbReference>
<dbReference type="InterPro" id="IPR032675">
    <property type="entry name" value="LRR_dom_sf"/>
</dbReference>
<dbReference type="InterPro" id="IPR013210">
    <property type="entry name" value="LRR_N_plant-typ"/>
</dbReference>
<dbReference type="InterPro" id="IPR000719">
    <property type="entry name" value="Prot_kinase_dom"/>
</dbReference>
<dbReference type="InterPro" id="IPR017441">
    <property type="entry name" value="Protein_kinase_ATP_BS"/>
</dbReference>
<dbReference type="InterPro" id="IPR001245">
    <property type="entry name" value="Ser-Thr/Tyr_kinase_cat_dom"/>
</dbReference>
<dbReference type="PANTHER" id="PTHR48010:SF76">
    <property type="entry name" value="INACTIVE RECEPTOR KINASE RLK902-RELATED"/>
    <property type="match status" value="1"/>
</dbReference>
<dbReference type="PANTHER" id="PTHR48010">
    <property type="entry name" value="OS05G0588300 PROTEIN"/>
    <property type="match status" value="1"/>
</dbReference>
<dbReference type="Pfam" id="PF00560">
    <property type="entry name" value="LRR_1"/>
    <property type="match status" value="2"/>
</dbReference>
<dbReference type="Pfam" id="PF08263">
    <property type="entry name" value="LRRNT_2"/>
    <property type="match status" value="1"/>
</dbReference>
<dbReference type="Pfam" id="PF07714">
    <property type="entry name" value="PK_Tyr_Ser-Thr"/>
    <property type="match status" value="1"/>
</dbReference>
<dbReference type="SUPFAM" id="SSF52058">
    <property type="entry name" value="L domain-like"/>
    <property type="match status" value="1"/>
</dbReference>
<dbReference type="SUPFAM" id="SSF56112">
    <property type="entry name" value="Protein kinase-like (PK-like)"/>
    <property type="match status" value="1"/>
</dbReference>
<dbReference type="PROSITE" id="PS00107">
    <property type="entry name" value="PROTEIN_KINASE_ATP"/>
    <property type="match status" value="1"/>
</dbReference>
<dbReference type="PROSITE" id="PS50011">
    <property type="entry name" value="PROTEIN_KINASE_DOM"/>
    <property type="match status" value="1"/>
</dbReference>
<proteinExistence type="evidence at protein level"/>
<gene>
    <name type="primary">RLK902</name>
    <name type="ordered locus">At3g17840</name>
    <name type="ORF">MEB5.6</name>
</gene>
<evidence type="ECO:0000250" key="1">
    <source>
        <dbReference type="UniProtKB" id="Q94AG2"/>
    </source>
</evidence>
<evidence type="ECO:0000250" key="2">
    <source>
        <dbReference type="UniProtKB" id="Q94F62"/>
    </source>
</evidence>
<evidence type="ECO:0000255" key="3"/>
<evidence type="ECO:0000255" key="4">
    <source>
        <dbReference type="PROSITE-ProRule" id="PRU00159"/>
    </source>
</evidence>
<evidence type="ECO:0000269" key="5">
    <source>
    </source>
</evidence>
<evidence type="ECO:0000269" key="6">
    <source>
    </source>
</evidence>
<evidence type="ECO:0000269" key="7">
    <source>
    </source>
</evidence>
<evidence type="ECO:0000305" key="8"/>
<evidence type="ECO:0000305" key="9">
    <source>
    </source>
</evidence>
<comment type="subunit">
    <text evidence="6">Interacts with At3g17950, At3g27210 and At5g05190.</text>
</comment>
<comment type="interaction">
    <interactant intactId="EBI-1626936">
        <id>Q9LVI6</id>
    </interactant>
    <interactant intactId="EBI-20654003">
        <id>F4I336</id>
        <label>At1g29730</label>
    </interactant>
    <organismsDiffer>false</organismsDiffer>
    <experiments>2</experiments>
</comment>
<comment type="interaction">
    <interactant intactId="EBI-1626936">
        <id>Q9LVI6</id>
    </interactant>
    <interactant intactId="EBI-20654598">
        <id>F4I065</id>
        <label>At1g49100</label>
    </interactant>
    <organismsDiffer>false</organismsDiffer>
    <experiments>2</experiments>
</comment>
<comment type="interaction">
    <interactant intactId="EBI-1626936">
        <id>Q9LVI6</id>
    </interactant>
    <interactant intactId="EBI-20652336">
        <id>A0A178WLG7</id>
        <label>At1g51790</label>
    </interactant>
    <organismsDiffer>false</organismsDiffer>
    <experiments>3</experiments>
</comment>
<comment type="interaction">
    <interactant intactId="EBI-1626936">
        <id>Q9LVI6</id>
    </interactant>
    <interactant intactId="EBI-20655952">
        <id>C0LGG6-2</id>
        <label>At1g51890</label>
    </interactant>
    <organismsDiffer>false</organismsDiffer>
    <experiments>2</experiments>
</comment>
<comment type="interaction">
    <interactant intactId="EBI-1626936">
        <id>Q9LVI6</id>
    </interactant>
    <interactant intactId="EBI-20656135">
        <id>C0LGG8</id>
        <label>At1g53430</label>
    </interactant>
    <organismsDiffer>false</organismsDiffer>
    <experiments>2</experiments>
</comment>
<comment type="interaction">
    <interactant intactId="EBI-1626936">
        <id>Q9LVI6</id>
    </interactant>
    <interactant intactId="EBI-20656718">
        <id>A0A1P8ASI5</id>
        <label>At1g56120</label>
    </interactant>
    <organismsDiffer>false</organismsDiffer>
    <experiments>4</experiments>
</comment>
<comment type="interaction">
    <interactant intactId="EBI-1626936">
        <id>Q9LVI6</id>
    </interactant>
    <interactant intactId="EBI-20657508">
        <id>A0A178WK49</id>
        <label>At1g62950</label>
    </interactant>
    <organismsDiffer>false</organismsDiffer>
    <experiments>3</experiments>
</comment>
<comment type="interaction">
    <interactant intactId="EBI-1626936">
        <id>Q9LVI6</id>
    </interactant>
    <interactant intactId="EBI-20657656">
        <id>C0LGH8</id>
        <label>At1g63430</label>
    </interactant>
    <organismsDiffer>false</organismsDiffer>
    <experiments>4</experiments>
</comment>
<comment type="interaction">
    <interactant intactId="EBI-1626936">
        <id>Q9LVI6</id>
    </interactant>
    <interactant intactId="EBI-20652666">
        <id>C0LGJ1</id>
        <label>At1g74360</label>
    </interactant>
    <organismsDiffer>false</organismsDiffer>
    <experiments>4</experiments>
</comment>
<comment type="interaction">
    <interactant intactId="EBI-1626936">
        <id>Q9LVI6</id>
    </interactant>
    <interactant intactId="EBI-20662335">
        <id>O64556</id>
        <label>At2g19230</label>
    </interactant>
    <organismsDiffer>false</organismsDiffer>
    <experiments>4</experiments>
</comment>
<comment type="interaction">
    <interactant intactId="EBI-1626936">
        <id>Q9LVI6</id>
    </interactant>
    <interactant intactId="EBI-941096">
        <id>Q9LIG2</id>
        <label>At3g21340</label>
    </interactant>
    <organismsDiffer>false</organismsDiffer>
    <experiments>2</experiments>
</comment>
<comment type="interaction">
    <interactant intactId="EBI-1626936">
        <id>Q9LVI6</id>
    </interactant>
    <interactant intactId="EBI-20664191">
        <id>Q9LFG1</id>
        <label>At3g53590</label>
    </interactant>
    <organismsDiffer>false</organismsDiffer>
    <experiments>3</experiments>
</comment>
<comment type="interaction">
    <interactant intactId="EBI-1626936">
        <id>Q9LVI6</id>
    </interactant>
    <interactant intactId="EBI-17123993">
        <id>Q9LT96</id>
        <label>At5g49770</label>
    </interactant>
    <organismsDiffer>false</organismsDiffer>
    <experiments>2</experiments>
</comment>
<comment type="interaction">
    <interactant intactId="EBI-1626936">
        <id>Q9LVI6</id>
    </interactant>
    <interactant intactId="EBI-16887796">
        <id>O64794</id>
        <label>F12B7.6</label>
    </interactant>
    <organismsDiffer>false</organismsDiffer>
    <experiments>2</experiments>
</comment>
<comment type="interaction">
    <interactant intactId="EBI-1626936">
        <id>Q9LVI6</id>
    </interactant>
    <interactant intactId="EBI-20658889">
        <id>Q9SNA2</id>
        <label>F18L15.70</label>
    </interactant>
    <organismsDiffer>false</organismsDiffer>
    <experiments>3</experiments>
</comment>
<comment type="interaction">
    <interactant intactId="EBI-1626936">
        <id>Q9LVI6</id>
    </interactant>
    <interactant intactId="EBI-20664220">
        <id>Q9LJM4</id>
        <label>IKU2</label>
    </interactant>
    <organismsDiffer>false</organismsDiffer>
    <experiments>2</experiments>
</comment>
<comment type="interaction">
    <interactant intactId="EBI-1626936">
        <id>Q9LVI6</id>
    </interactant>
    <interactant intactId="EBI-20663701">
        <id>C0LGP2</id>
        <label>MEE39</label>
    </interactant>
    <organismsDiffer>false</organismsDiffer>
    <experiments>2</experiments>
</comment>
<comment type="interaction">
    <interactant intactId="EBI-1626936">
        <id>Q9LVI6</id>
    </interactant>
    <interactant intactId="EBI-17121474">
        <id>Q93ZS4</id>
        <label>NIK3</label>
    </interactant>
    <organismsDiffer>false</organismsDiffer>
    <experiments>2</experiments>
</comment>
<comment type="interaction">
    <interactant intactId="EBI-1626936">
        <id>Q9LVI6</id>
    </interactant>
    <interactant intactId="EBI-16172949">
        <id>Q9ZVR7</id>
        <label>PSKR1</label>
    </interactant>
    <organismsDiffer>false</organismsDiffer>
    <experiments>2</experiments>
</comment>
<comment type="interaction">
    <interactant intactId="EBI-1626936">
        <id>Q9LVI6</id>
    </interactant>
    <interactant intactId="EBI-16902047">
        <id>Q9FN37</id>
        <label>PSKR2</label>
    </interactant>
    <organismsDiffer>false</organismsDiffer>
    <experiments>2</experiments>
</comment>
<comment type="interaction">
    <interactant intactId="EBI-1626936">
        <id>Q9LVI6</id>
    </interactant>
    <interactant intactId="EBI-16964286">
        <id>C0LGF5</id>
        <label>RGI5</label>
    </interactant>
    <organismsDiffer>false</organismsDiffer>
    <experiments>2</experiments>
</comment>
<comment type="interaction">
    <interactant intactId="EBI-1626936">
        <id>Q9LVI6</id>
    </interactant>
    <interactant intactId="EBI-16905883">
        <id>Q9SKB2</id>
        <label>SOBIR1</label>
    </interactant>
    <organismsDiffer>false</organismsDiffer>
    <experiments>3</experiments>
</comment>
<comment type="interaction">
    <interactant intactId="EBI-1626936">
        <id>Q9LVI6</id>
    </interactant>
    <interactant intactId="EBI-16954860">
        <id>Q9ZU46</id>
        <label>ZAR1</label>
    </interactant>
    <organismsDiffer>false</organismsDiffer>
    <experiments>4</experiments>
</comment>
<comment type="subcellular location">
    <subcellularLocation>
        <location evidence="5 7">Cell membrane</location>
        <topology evidence="5 7">Single-pass membrane protein</topology>
    </subcellularLocation>
</comment>
<comment type="tissue specificity">
    <text evidence="5">Expressed in root tips, lateral root primordia, stipules, and floral organ abscission zones.</text>
</comment>
<comment type="induction">
    <text evidence="6">By wounding. Rapid but transient down-regulation by salicylic acid treatment or pathogen infection.</text>
</comment>
<comment type="domain">
    <text>The protein kinase domain is predicted to be catalytically inactive.</text>
</comment>
<comment type="PTM">
    <text>Autophosphorylation.</text>
</comment>
<comment type="disruption phenotype">
    <text evidence="5">No visible phenotype.</text>
</comment>
<comment type="similarity">
    <text evidence="4">Belongs to the protein kinase superfamily. Ser/Thr protein kinase family.</text>
</comment>
<comment type="caution">
    <text evidence="9">Autophosphorylation is proposed although the protein kinase domain is predicted to be catalytically inactive.</text>
</comment>
<comment type="sequence caution" evidence="8">
    <conflict type="erroneous initiation">
        <sequence resource="EMBL-CDS" id="AAM64268"/>
    </conflict>
</comment>
<keyword id="KW-0067">ATP-binding</keyword>
<keyword id="KW-1003">Cell membrane</keyword>
<keyword id="KW-0433">Leucine-rich repeat</keyword>
<keyword id="KW-0472">Membrane</keyword>
<keyword id="KW-0547">Nucleotide-binding</keyword>
<keyword id="KW-0597">Phosphoprotein</keyword>
<keyword id="KW-0675">Receptor</keyword>
<keyword id="KW-1185">Reference proteome</keyword>
<keyword id="KW-0677">Repeat</keyword>
<keyword id="KW-0732">Signal</keyword>
<keyword id="KW-0812">Transmembrane</keyword>
<keyword id="KW-1133">Transmembrane helix</keyword>
<organism>
    <name type="scientific">Arabidopsis thaliana</name>
    <name type="common">Mouse-ear cress</name>
    <dbReference type="NCBI Taxonomy" id="3702"/>
    <lineage>
        <taxon>Eukaryota</taxon>
        <taxon>Viridiplantae</taxon>
        <taxon>Streptophyta</taxon>
        <taxon>Embryophyta</taxon>
        <taxon>Tracheophyta</taxon>
        <taxon>Spermatophyta</taxon>
        <taxon>Magnoliopsida</taxon>
        <taxon>eudicotyledons</taxon>
        <taxon>Gunneridae</taxon>
        <taxon>Pentapetalae</taxon>
        <taxon>rosids</taxon>
        <taxon>malvids</taxon>
        <taxon>Brassicales</taxon>
        <taxon>Brassicaceae</taxon>
        <taxon>Camelineae</taxon>
        <taxon>Arabidopsis</taxon>
    </lineage>
</organism>
<feature type="signal peptide" evidence="3">
    <location>
        <begin position="1"/>
        <end position="29"/>
    </location>
</feature>
<feature type="chain" id="PRO_0000317073" description="Probable inactive receptor kinase RLK902">
    <location>
        <begin position="30"/>
        <end position="647"/>
    </location>
</feature>
<feature type="transmembrane region" description="Helical" evidence="3">
    <location>
        <begin position="268"/>
        <end position="288"/>
    </location>
</feature>
<feature type="repeat" description="LRR 1">
    <location>
        <begin position="69"/>
        <end position="93"/>
    </location>
</feature>
<feature type="repeat" description="LRR 2">
    <location>
        <begin position="94"/>
        <end position="118"/>
    </location>
</feature>
<feature type="repeat" description="LRR 3">
    <location>
        <begin position="119"/>
        <end position="142"/>
    </location>
</feature>
<feature type="repeat" description="LRR 4">
    <location>
        <begin position="144"/>
        <end position="165"/>
    </location>
</feature>
<feature type="repeat" description="LRR 5">
    <location>
        <begin position="166"/>
        <end position="192"/>
    </location>
</feature>
<feature type="domain" description="Protein kinase" evidence="4">
    <location>
        <begin position="365"/>
        <end position="639"/>
    </location>
</feature>
<feature type="binding site" evidence="4">
    <location>
        <begin position="371"/>
        <end position="379"/>
    </location>
    <ligand>
        <name>ATP</name>
        <dbReference type="ChEBI" id="CHEBI:30616"/>
    </ligand>
</feature>
<feature type="binding site" evidence="4">
    <location>
        <position position="393"/>
    </location>
    <ligand>
        <name>ATP</name>
        <dbReference type="ChEBI" id="CHEBI:30616"/>
    </ligand>
</feature>
<feature type="modified residue" description="Phosphoserine" evidence="2">
    <location>
        <position position="367"/>
    </location>
</feature>
<feature type="modified residue" description="Phosphothreonine" evidence="2">
    <location>
        <position position="388"/>
    </location>
</feature>
<feature type="modified residue" description="Phosphoserine" evidence="1">
    <location>
        <position position="444"/>
    </location>
</feature>
<feature type="modified residue" description="Phosphothreonine" evidence="2">
    <location>
        <position position="520"/>
    </location>
</feature>
<feature type="modified residue" description="Phosphoserine" evidence="1">
    <location>
        <position position="540"/>
    </location>
</feature>
<feature type="modified residue" description="Phosphothreonine" evidence="1">
    <location>
        <position position="618"/>
    </location>
</feature>
<feature type="sequence conflict" description="In Ref. 4; AAM64268." evidence="8" ref="4">
    <original>S</original>
    <variation>R</variation>
    <location>
        <position position="117"/>
    </location>
</feature>
<feature type="sequence conflict" description="In Ref. 4; AAM64268." evidence="8" ref="4">
    <original>S</original>
    <variation>R</variation>
    <location>
        <position position="252"/>
    </location>
</feature>
<protein>
    <recommendedName>
        <fullName>Probable inactive receptor kinase RLK902</fullName>
    </recommendedName>
    <alternativeName>
        <fullName>Receptor-like kinase 902</fullName>
    </alternativeName>
</protein>
<accession>Q9LVI6</accession>
<accession>Q8LD58</accession>